<organism>
    <name type="scientific">Mycoplasmoides gallisepticum (strain R(low / passage 15 / clone 2))</name>
    <name type="common">Mycoplasma gallisepticum</name>
    <dbReference type="NCBI Taxonomy" id="710127"/>
    <lineage>
        <taxon>Bacteria</taxon>
        <taxon>Bacillati</taxon>
        <taxon>Mycoplasmatota</taxon>
        <taxon>Mycoplasmoidales</taxon>
        <taxon>Mycoplasmoidaceae</taxon>
        <taxon>Mycoplasmoides</taxon>
    </lineage>
</organism>
<protein>
    <recommendedName>
        <fullName evidence="1">Small ribosomal subunit protein uS5</fullName>
    </recommendedName>
    <alternativeName>
        <fullName evidence="3">30S ribosomal protein S5</fullName>
    </alternativeName>
</protein>
<sequence length="226" mass="24579">MEDIKHNKKPNTNNSAETKKASGANPQANHANPNNRSASVNNNSVNNNKKNSSRSSDERNKRKNEKRTKSEFEEKIVKISRISKTTKGGRTMRFSALVVVGDRKGRVGFGIAKALEVPNAIKKALKMAENNVQKIAMNKHGTLFHDVLGRSGAAKVLIKPAPSGTGIIAGGAIRAVVELAGFTDVYTKNMGKNTPINMVRATMDGITSQYTPRQIAKLRSKSLKEL</sequence>
<keyword id="KW-1185">Reference proteome</keyword>
<keyword id="KW-0687">Ribonucleoprotein</keyword>
<keyword id="KW-0689">Ribosomal protein</keyword>
<keyword id="KW-0694">RNA-binding</keyword>
<keyword id="KW-0699">rRNA-binding</keyword>
<feature type="chain" id="PRO_0000131546" description="Small ribosomal subunit protein uS5">
    <location>
        <begin position="1"/>
        <end position="226"/>
    </location>
</feature>
<feature type="domain" description="S5 DRBM" evidence="1">
    <location>
        <begin position="72"/>
        <end position="135"/>
    </location>
</feature>
<feature type="region of interest" description="Disordered" evidence="2">
    <location>
        <begin position="1"/>
        <end position="71"/>
    </location>
</feature>
<feature type="compositionally biased region" description="Low complexity" evidence="2">
    <location>
        <begin position="24"/>
        <end position="54"/>
    </location>
</feature>
<feature type="sequence conflict" description="In Ref. 1; AAB95404." evidence="3" ref="1">
    <original>A</original>
    <variation>V</variation>
    <location>
        <position position="21"/>
    </location>
</feature>
<feature type="sequence conflict" description="In Ref. 1; AAB95404." evidence="3" ref="1">
    <original>H</original>
    <variation>R</variation>
    <location>
        <position position="30"/>
    </location>
</feature>
<feature type="sequence conflict" description="In Ref. 1; AAB95404." evidence="3" ref="1">
    <location>
        <begin position="44"/>
        <end position="48"/>
    </location>
</feature>
<accession>O52349</accession>
<dbReference type="EMBL" id="AF036708">
    <property type="protein sequence ID" value="AAB95404.1"/>
    <property type="molecule type" value="Genomic_DNA"/>
</dbReference>
<dbReference type="EMBL" id="AE015450">
    <property type="protein sequence ID" value="AAP56418.2"/>
    <property type="molecule type" value="Genomic_DNA"/>
</dbReference>
<dbReference type="RefSeq" id="WP_011113297.1">
    <property type="nucleotide sequence ID" value="NC_004829.2"/>
</dbReference>
<dbReference type="SMR" id="O52349"/>
<dbReference type="GeneID" id="93509886"/>
<dbReference type="KEGG" id="mga:MGA_0737"/>
<dbReference type="PATRIC" id="fig|233150.7.peg.72"/>
<dbReference type="HOGENOM" id="CLU_065898_2_1_14"/>
<dbReference type="OrthoDB" id="9809045at2"/>
<dbReference type="Proteomes" id="UP000001418">
    <property type="component" value="Chromosome"/>
</dbReference>
<dbReference type="GO" id="GO:0015935">
    <property type="term" value="C:small ribosomal subunit"/>
    <property type="evidence" value="ECO:0007669"/>
    <property type="project" value="InterPro"/>
</dbReference>
<dbReference type="GO" id="GO:0019843">
    <property type="term" value="F:rRNA binding"/>
    <property type="evidence" value="ECO:0007669"/>
    <property type="project" value="UniProtKB-UniRule"/>
</dbReference>
<dbReference type="GO" id="GO:0003735">
    <property type="term" value="F:structural constituent of ribosome"/>
    <property type="evidence" value="ECO:0007669"/>
    <property type="project" value="InterPro"/>
</dbReference>
<dbReference type="GO" id="GO:0006412">
    <property type="term" value="P:translation"/>
    <property type="evidence" value="ECO:0007669"/>
    <property type="project" value="UniProtKB-UniRule"/>
</dbReference>
<dbReference type="FunFam" id="3.30.160.20:FF:000001">
    <property type="entry name" value="30S ribosomal protein S5"/>
    <property type="match status" value="1"/>
</dbReference>
<dbReference type="FunFam" id="3.30.230.10:FF:000002">
    <property type="entry name" value="30S ribosomal protein S5"/>
    <property type="match status" value="1"/>
</dbReference>
<dbReference type="Gene3D" id="3.30.160.20">
    <property type="match status" value="1"/>
</dbReference>
<dbReference type="Gene3D" id="3.30.230.10">
    <property type="match status" value="1"/>
</dbReference>
<dbReference type="HAMAP" id="MF_01307_B">
    <property type="entry name" value="Ribosomal_uS5_B"/>
    <property type="match status" value="1"/>
</dbReference>
<dbReference type="InterPro" id="IPR020568">
    <property type="entry name" value="Ribosomal_Su5_D2-typ_SF"/>
</dbReference>
<dbReference type="InterPro" id="IPR000851">
    <property type="entry name" value="Ribosomal_uS5"/>
</dbReference>
<dbReference type="InterPro" id="IPR005712">
    <property type="entry name" value="Ribosomal_uS5_bac-type"/>
</dbReference>
<dbReference type="InterPro" id="IPR005324">
    <property type="entry name" value="Ribosomal_uS5_C"/>
</dbReference>
<dbReference type="InterPro" id="IPR013810">
    <property type="entry name" value="Ribosomal_uS5_N"/>
</dbReference>
<dbReference type="InterPro" id="IPR018192">
    <property type="entry name" value="Ribosomal_uS5_N_CS"/>
</dbReference>
<dbReference type="InterPro" id="IPR014721">
    <property type="entry name" value="Ribsml_uS5_D2-typ_fold_subgr"/>
</dbReference>
<dbReference type="NCBIfam" id="TIGR01021">
    <property type="entry name" value="rpsE_bact"/>
    <property type="match status" value="1"/>
</dbReference>
<dbReference type="PANTHER" id="PTHR48277">
    <property type="entry name" value="MITOCHONDRIAL RIBOSOMAL PROTEIN S5"/>
    <property type="match status" value="1"/>
</dbReference>
<dbReference type="PANTHER" id="PTHR48277:SF1">
    <property type="entry name" value="MITOCHONDRIAL RIBOSOMAL PROTEIN S5"/>
    <property type="match status" value="1"/>
</dbReference>
<dbReference type="Pfam" id="PF00333">
    <property type="entry name" value="Ribosomal_S5"/>
    <property type="match status" value="1"/>
</dbReference>
<dbReference type="Pfam" id="PF03719">
    <property type="entry name" value="Ribosomal_S5_C"/>
    <property type="match status" value="1"/>
</dbReference>
<dbReference type="SUPFAM" id="SSF54768">
    <property type="entry name" value="dsRNA-binding domain-like"/>
    <property type="match status" value="1"/>
</dbReference>
<dbReference type="SUPFAM" id="SSF54211">
    <property type="entry name" value="Ribosomal protein S5 domain 2-like"/>
    <property type="match status" value="1"/>
</dbReference>
<dbReference type="PROSITE" id="PS00585">
    <property type="entry name" value="RIBOSOMAL_S5"/>
    <property type="match status" value="1"/>
</dbReference>
<dbReference type="PROSITE" id="PS50881">
    <property type="entry name" value="S5_DSRBD"/>
    <property type="match status" value="1"/>
</dbReference>
<evidence type="ECO:0000255" key="1">
    <source>
        <dbReference type="HAMAP-Rule" id="MF_01307"/>
    </source>
</evidence>
<evidence type="ECO:0000256" key="2">
    <source>
        <dbReference type="SAM" id="MobiDB-lite"/>
    </source>
</evidence>
<evidence type="ECO:0000305" key="3"/>
<reference key="1">
    <citation type="journal article" date="2000" name="Mol. Biol. (Mosk.)">
        <title>Determination and analysis of the nucleotide sequence of a segment of a Mycoplasma gallisepticum strain A5969 chromosome, containing operons S10 and rrn23-5.</title>
        <authorList>
            <person name="Skamrov A.V."/>
            <person name="Gol'dman M.A."/>
            <person name="Feoktistova E.S."/>
            <person name="Bibilashvili R.S."/>
        </authorList>
    </citation>
    <scope>NUCLEOTIDE SEQUENCE [GENOMIC DNA]</scope>
    <source>
        <strain>A5969Var.B</strain>
    </source>
</reference>
<reference key="2">
    <citation type="journal article" date="2003" name="Microbiology">
        <title>The complete genome sequence of the avian pathogen Mycoplasma gallisepticum strain R(low).</title>
        <authorList>
            <person name="Papazisi L."/>
            <person name="Gorton T.S."/>
            <person name="Kutish G."/>
            <person name="Markham P.F."/>
            <person name="Browning G.F."/>
            <person name="Nguyen D.K."/>
            <person name="Swartzell S."/>
            <person name="Madan A."/>
            <person name="Mahairas G."/>
            <person name="Geary S.J."/>
        </authorList>
    </citation>
    <scope>NUCLEOTIDE SEQUENCE [LARGE SCALE GENOMIC DNA]</scope>
    <source>
        <strain>R(low / passage 15 / clone 2)</strain>
    </source>
</reference>
<comment type="function">
    <text evidence="1">With S4 and S12 plays an important role in translational accuracy.</text>
</comment>
<comment type="function">
    <text evidence="1">Located at the back of the 30S subunit body where it stabilizes the conformation of the head with respect to the body.</text>
</comment>
<comment type="subunit">
    <text evidence="1">Part of the 30S ribosomal subunit. Contacts proteins S4 and S8.</text>
</comment>
<comment type="domain">
    <text>The N-terminal domain interacts with the head of the 30S subunit; the C-terminal domain interacts with the body and contacts protein S4. The interaction surface between S4 and S5 is involved in control of translational fidelity.</text>
</comment>
<comment type="similarity">
    <text evidence="1">Belongs to the universal ribosomal protein uS5 family.</text>
</comment>
<proteinExistence type="inferred from homology"/>
<name>RS5_MYCGA</name>
<gene>
    <name evidence="1" type="primary">rpsE</name>
    <name evidence="1" type="synonym">rps5</name>
    <name type="ordered locus">MYCGA0680</name>
    <name type="ORF">MGA_0737</name>
</gene>